<proteinExistence type="inferred from homology"/>
<protein>
    <recommendedName>
        <fullName>Protein Wnt-5b</fullName>
    </recommendedName>
</protein>
<accession>P28104</accession>
<dbReference type="EMBL" id="M91255">
    <property type="protein sequence ID" value="AAA48541.1"/>
    <property type="molecule type" value="Genomic_DNA"/>
</dbReference>
<dbReference type="SMR" id="P28104"/>
<dbReference type="GlyCosmos" id="P28104">
    <property type="glycosylation" value="2 sites, No reported glycans"/>
</dbReference>
<dbReference type="GO" id="GO:0005615">
    <property type="term" value="C:extracellular space"/>
    <property type="evidence" value="ECO:0007669"/>
    <property type="project" value="TreeGrafter"/>
</dbReference>
<dbReference type="GO" id="GO:0005125">
    <property type="term" value="F:cytokine activity"/>
    <property type="evidence" value="ECO:0007669"/>
    <property type="project" value="TreeGrafter"/>
</dbReference>
<dbReference type="GO" id="GO:0005109">
    <property type="term" value="F:frizzled binding"/>
    <property type="evidence" value="ECO:0007669"/>
    <property type="project" value="TreeGrafter"/>
</dbReference>
<dbReference type="GO" id="GO:0060070">
    <property type="term" value="P:canonical Wnt signaling pathway"/>
    <property type="evidence" value="ECO:0007669"/>
    <property type="project" value="TreeGrafter"/>
</dbReference>
<dbReference type="GO" id="GO:0045165">
    <property type="term" value="P:cell fate commitment"/>
    <property type="evidence" value="ECO:0007669"/>
    <property type="project" value="TreeGrafter"/>
</dbReference>
<dbReference type="GO" id="GO:0042692">
    <property type="term" value="P:muscle cell differentiation"/>
    <property type="evidence" value="ECO:0000250"/>
    <property type="project" value="UniProtKB"/>
</dbReference>
<dbReference type="GO" id="GO:0030182">
    <property type="term" value="P:neuron differentiation"/>
    <property type="evidence" value="ECO:0007669"/>
    <property type="project" value="TreeGrafter"/>
</dbReference>
<dbReference type="GO" id="GO:1904105">
    <property type="term" value="P:positive regulation of convergent extension involved in gastrulation"/>
    <property type="evidence" value="ECO:0000250"/>
    <property type="project" value="UniProtKB"/>
</dbReference>
<dbReference type="GO" id="GO:2000052">
    <property type="term" value="P:positive regulation of non-canonical Wnt signaling pathway"/>
    <property type="evidence" value="ECO:0000250"/>
    <property type="project" value="UniProtKB"/>
</dbReference>
<dbReference type="Gene3D" id="3.30.2460.20">
    <property type="match status" value="1"/>
</dbReference>
<dbReference type="InterPro" id="IPR005817">
    <property type="entry name" value="Wnt"/>
</dbReference>
<dbReference type="InterPro" id="IPR043158">
    <property type="entry name" value="Wnt_C"/>
</dbReference>
<dbReference type="PANTHER" id="PTHR12027:SF77">
    <property type="entry name" value="PROTEIN WNT-5"/>
    <property type="match status" value="1"/>
</dbReference>
<dbReference type="PANTHER" id="PTHR12027">
    <property type="entry name" value="WNT RELATED"/>
    <property type="match status" value="1"/>
</dbReference>
<dbReference type="Pfam" id="PF00110">
    <property type="entry name" value="wnt"/>
    <property type="match status" value="1"/>
</dbReference>
<dbReference type="SMART" id="SM00097">
    <property type="entry name" value="WNT1"/>
    <property type="match status" value="1"/>
</dbReference>
<sequence length="116" mass="12962">SGSCSLKTCWLQLADFRKVGDLLKEKYDSAAAMKITRKGKLELVNSRFNPPTPDDLVYLDQSPDYCVKNKSTGSLGTMGRLCNKTSEGMDGCELMCCGRGYDQFKTVQVERCHCKF</sequence>
<reference key="1">
    <citation type="journal article" date="1992" name="Proc. Natl. Acad. Sci. U.S.A.">
        <title>Diversification of the Wnt gene family on the ancestral lineage of vertebrates.</title>
        <authorList>
            <person name="Sidow A."/>
        </authorList>
    </citation>
    <scope>NUCLEOTIDE SEQUENCE [GENOMIC DNA]</scope>
</reference>
<evidence type="ECO:0000250" key="1">
    <source>
        <dbReference type="UniProtKB" id="P27467"/>
    </source>
</evidence>
<evidence type="ECO:0000250" key="2">
    <source>
        <dbReference type="UniProtKB" id="P28026"/>
    </source>
</evidence>
<evidence type="ECO:0000250" key="3">
    <source>
        <dbReference type="UniProtKB" id="P56704"/>
    </source>
</evidence>
<evidence type="ECO:0000255" key="4"/>
<evidence type="ECO:0000305" key="5"/>
<comment type="function">
    <text>Ligand for members of the frizzled family of seven transmembrane receptors. Probable developmental protein. May be a signaling molecule which affects the development of discrete regions of tissues. Is likely to signal over only few cell diameters.</text>
</comment>
<comment type="subcellular location">
    <subcellularLocation>
        <location>Secreted</location>
        <location>Extracellular space</location>
        <location>Extracellular matrix</location>
    </subcellularLocation>
</comment>
<comment type="PTM">
    <text evidence="1 3">Palmitoleoylation is required for efficient binding to frizzled receptors. Depalmitoleoylation leads to Wnt signaling pathway inhibition.</text>
</comment>
<comment type="similarity">
    <text evidence="5">Belongs to the Wnt family.</text>
</comment>
<gene>
    <name type="primary">WNT-5B</name>
</gene>
<feature type="chain" id="PRO_0000200632" description="Protein Wnt-5b">
    <location>
        <begin position="1" status="less than"/>
        <end position="116" status="greater than"/>
    </location>
</feature>
<feature type="lipid moiety-binding region" description="O-palmitoleoyl serine; by PORCN" evidence="3">
    <location>
        <position position="1"/>
    </location>
</feature>
<feature type="glycosylation site" description="N-linked (GlcNAc...) asparagine" evidence="4">
    <location>
        <position position="69"/>
    </location>
</feature>
<feature type="glycosylation site" description="N-linked (GlcNAc...) asparagine" evidence="4">
    <location>
        <position position="83"/>
    </location>
</feature>
<feature type="disulfide bond" evidence="2">
    <location>
        <begin position="82"/>
        <end position="97"/>
    </location>
</feature>
<feature type="non-terminal residue">
    <location>
        <position position="1"/>
    </location>
</feature>
<feature type="non-terminal residue">
    <location>
        <position position="116"/>
    </location>
</feature>
<organism>
    <name type="scientific">Alopias vulpinus</name>
    <name type="common">Common thresher shark</name>
    <name type="synonym">Squalus vulpinus</name>
    <dbReference type="NCBI Taxonomy" id="7852"/>
    <lineage>
        <taxon>Eukaryota</taxon>
        <taxon>Metazoa</taxon>
        <taxon>Chordata</taxon>
        <taxon>Craniata</taxon>
        <taxon>Vertebrata</taxon>
        <taxon>Chondrichthyes</taxon>
        <taxon>Elasmobranchii</taxon>
        <taxon>Galeomorphii</taxon>
        <taxon>Galeoidea</taxon>
        <taxon>Lamniformes</taxon>
        <taxon>Alopiidae</taxon>
        <taxon>Alopias</taxon>
    </lineage>
</organism>
<keyword id="KW-0217">Developmental protein</keyword>
<keyword id="KW-1015">Disulfide bond</keyword>
<keyword id="KW-0272">Extracellular matrix</keyword>
<keyword id="KW-0325">Glycoprotein</keyword>
<keyword id="KW-0449">Lipoprotein</keyword>
<keyword id="KW-0964">Secreted</keyword>
<keyword id="KW-0879">Wnt signaling pathway</keyword>
<name>WNT5B_ALOVU</name>